<gene>
    <name evidence="1" type="primary">nuoH</name>
    <name type="ordered locus">Bphy_2002</name>
</gene>
<dbReference type="EC" id="7.1.1.-" evidence="1"/>
<dbReference type="EMBL" id="CP001043">
    <property type="protein sequence ID" value="ACC71181.1"/>
    <property type="molecule type" value="Genomic_DNA"/>
</dbReference>
<dbReference type="RefSeq" id="WP_012401390.1">
    <property type="nucleotide sequence ID" value="NC_010622.1"/>
</dbReference>
<dbReference type="SMR" id="B2JDM1"/>
<dbReference type="STRING" id="391038.Bphy_2002"/>
<dbReference type="KEGG" id="bph:Bphy_2002"/>
<dbReference type="eggNOG" id="COG1005">
    <property type="taxonomic scope" value="Bacteria"/>
</dbReference>
<dbReference type="HOGENOM" id="CLU_015134_0_1_4"/>
<dbReference type="OrthoDB" id="9803734at2"/>
<dbReference type="Proteomes" id="UP000001192">
    <property type="component" value="Chromosome 1"/>
</dbReference>
<dbReference type="GO" id="GO:0005886">
    <property type="term" value="C:plasma membrane"/>
    <property type="evidence" value="ECO:0007669"/>
    <property type="project" value="UniProtKB-SubCell"/>
</dbReference>
<dbReference type="GO" id="GO:0003954">
    <property type="term" value="F:NADH dehydrogenase activity"/>
    <property type="evidence" value="ECO:0007669"/>
    <property type="project" value="TreeGrafter"/>
</dbReference>
<dbReference type="GO" id="GO:0016655">
    <property type="term" value="F:oxidoreductase activity, acting on NAD(P)H, quinone or similar compound as acceptor"/>
    <property type="evidence" value="ECO:0007669"/>
    <property type="project" value="UniProtKB-UniRule"/>
</dbReference>
<dbReference type="GO" id="GO:0048038">
    <property type="term" value="F:quinone binding"/>
    <property type="evidence" value="ECO:0007669"/>
    <property type="project" value="UniProtKB-KW"/>
</dbReference>
<dbReference type="GO" id="GO:0009060">
    <property type="term" value="P:aerobic respiration"/>
    <property type="evidence" value="ECO:0007669"/>
    <property type="project" value="TreeGrafter"/>
</dbReference>
<dbReference type="HAMAP" id="MF_01350">
    <property type="entry name" value="NDH1_NuoH"/>
    <property type="match status" value="1"/>
</dbReference>
<dbReference type="InterPro" id="IPR001694">
    <property type="entry name" value="NADH_UbQ_OxRdtase_su1/FPO"/>
</dbReference>
<dbReference type="InterPro" id="IPR018086">
    <property type="entry name" value="NADH_UbQ_OxRdtase_su1_CS"/>
</dbReference>
<dbReference type="NCBIfam" id="NF004741">
    <property type="entry name" value="PRK06076.1-2"/>
    <property type="match status" value="1"/>
</dbReference>
<dbReference type="NCBIfam" id="NF004742">
    <property type="entry name" value="PRK06076.1-3"/>
    <property type="match status" value="1"/>
</dbReference>
<dbReference type="PANTHER" id="PTHR11432">
    <property type="entry name" value="NADH DEHYDROGENASE SUBUNIT 1"/>
    <property type="match status" value="1"/>
</dbReference>
<dbReference type="PANTHER" id="PTHR11432:SF3">
    <property type="entry name" value="NADH-UBIQUINONE OXIDOREDUCTASE CHAIN 1"/>
    <property type="match status" value="1"/>
</dbReference>
<dbReference type="Pfam" id="PF00146">
    <property type="entry name" value="NADHdh"/>
    <property type="match status" value="1"/>
</dbReference>
<dbReference type="PROSITE" id="PS00668">
    <property type="entry name" value="COMPLEX1_ND1_2"/>
    <property type="match status" value="1"/>
</dbReference>
<organism>
    <name type="scientific">Paraburkholderia phymatum (strain DSM 17167 / CIP 108236 / LMG 21445 / STM815)</name>
    <name type="common">Burkholderia phymatum</name>
    <dbReference type="NCBI Taxonomy" id="391038"/>
    <lineage>
        <taxon>Bacteria</taxon>
        <taxon>Pseudomonadati</taxon>
        <taxon>Pseudomonadota</taxon>
        <taxon>Betaproteobacteria</taxon>
        <taxon>Burkholderiales</taxon>
        <taxon>Burkholderiaceae</taxon>
        <taxon>Paraburkholderia</taxon>
    </lineage>
</organism>
<sequence>MTLFESINAGGTQILGVAWPTVWALVRILVVAVVILLCVAYLILWERKLIGWMHVRLGPNRVGPAGLLQPIADVLKLLLKEVIQPTQASRWVYLVAPVMVVVPAFAVWAVIPFQAGAVLGDINAGLLYAISISSVGVYGVILAGWASNSKYAFLGAMRAAAQMVSYEVSMGFALVVVMMTAGTMNLSDIVGSQMRGIFASHGVTFLSWNWLPLLPAFVVYFVSGIAETNRHPFDVVEGESEIVAGHMIDYSGMAFALFFLAEYINMIVISALASILFLGGWSAPFEFLSFIPGIVWLVLKVFLLLSVFIWVRATFPRYRYDQIMRLGWKVFLPVTVIWVVVVGFWIMSPLNIWN</sequence>
<feature type="chain" id="PRO_1000143582" description="NADH-quinone oxidoreductase subunit H">
    <location>
        <begin position="1"/>
        <end position="354"/>
    </location>
</feature>
<feature type="transmembrane region" description="Helical" evidence="1">
    <location>
        <begin position="25"/>
        <end position="45"/>
    </location>
</feature>
<feature type="transmembrane region" description="Helical" evidence="1">
    <location>
        <begin position="91"/>
        <end position="111"/>
    </location>
</feature>
<feature type="transmembrane region" description="Helical" evidence="1">
    <location>
        <begin position="126"/>
        <end position="146"/>
    </location>
</feature>
<feature type="transmembrane region" description="Helical" evidence="1">
    <location>
        <begin position="170"/>
        <end position="190"/>
    </location>
</feature>
<feature type="transmembrane region" description="Helical" evidence="1">
    <location>
        <begin position="205"/>
        <end position="225"/>
    </location>
</feature>
<feature type="transmembrane region" description="Helical" evidence="1">
    <location>
        <begin position="257"/>
        <end position="277"/>
    </location>
</feature>
<feature type="transmembrane region" description="Helical" evidence="1">
    <location>
        <begin position="290"/>
        <end position="310"/>
    </location>
</feature>
<feature type="transmembrane region" description="Helical" evidence="1">
    <location>
        <begin position="330"/>
        <end position="350"/>
    </location>
</feature>
<name>NUOH_PARP8</name>
<accession>B2JDM1</accession>
<reference key="1">
    <citation type="journal article" date="2014" name="Stand. Genomic Sci.">
        <title>Complete genome sequence of Burkholderia phymatum STM815(T), a broad host range and efficient nitrogen-fixing symbiont of Mimosa species.</title>
        <authorList>
            <person name="Moulin L."/>
            <person name="Klonowska A."/>
            <person name="Caroline B."/>
            <person name="Booth K."/>
            <person name="Vriezen J.A."/>
            <person name="Melkonian R."/>
            <person name="James E.K."/>
            <person name="Young J.P."/>
            <person name="Bena G."/>
            <person name="Hauser L."/>
            <person name="Land M."/>
            <person name="Kyrpides N."/>
            <person name="Bruce D."/>
            <person name="Chain P."/>
            <person name="Copeland A."/>
            <person name="Pitluck S."/>
            <person name="Woyke T."/>
            <person name="Lizotte-Waniewski M."/>
            <person name="Bristow J."/>
            <person name="Riley M."/>
        </authorList>
    </citation>
    <scope>NUCLEOTIDE SEQUENCE [LARGE SCALE GENOMIC DNA]</scope>
    <source>
        <strain>DSM 17167 / CIP 108236 / LMG 21445 / STM815</strain>
    </source>
</reference>
<comment type="function">
    <text evidence="1">NDH-1 shuttles electrons from NADH, via FMN and iron-sulfur (Fe-S) centers, to quinones in the respiratory chain. The immediate electron acceptor for the enzyme in this species is believed to be ubiquinone. Couples the redox reaction to proton translocation (for every two electrons transferred, four hydrogen ions are translocated across the cytoplasmic membrane), and thus conserves the redox energy in a proton gradient. This subunit may bind ubiquinone.</text>
</comment>
<comment type="catalytic activity">
    <reaction evidence="1">
        <text>a quinone + NADH + 5 H(+)(in) = a quinol + NAD(+) + 4 H(+)(out)</text>
        <dbReference type="Rhea" id="RHEA:57888"/>
        <dbReference type="ChEBI" id="CHEBI:15378"/>
        <dbReference type="ChEBI" id="CHEBI:24646"/>
        <dbReference type="ChEBI" id="CHEBI:57540"/>
        <dbReference type="ChEBI" id="CHEBI:57945"/>
        <dbReference type="ChEBI" id="CHEBI:132124"/>
    </reaction>
</comment>
<comment type="subunit">
    <text evidence="1">NDH-1 is composed of 14 different subunits. Subunits NuoA, H, J, K, L, M, N constitute the membrane sector of the complex.</text>
</comment>
<comment type="subcellular location">
    <subcellularLocation>
        <location evidence="1">Cell inner membrane</location>
        <topology evidence="1">Multi-pass membrane protein</topology>
    </subcellularLocation>
</comment>
<comment type="similarity">
    <text evidence="1">Belongs to the complex I subunit 1 family.</text>
</comment>
<protein>
    <recommendedName>
        <fullName evidence="1">NADH-quinone oxidoreductase subunit H</fullName>
        <ecNumber evidence="1">7.1.1.-</ecNumber>
    </recommendedName>
    <alternativeName>
        <fullName evidence="1">NADH dehydrogenase I subunit H</fullName>
    </alternativeName>
    <alternativeName>
        <fullName evidence="1">NDH-1 subunit H</fullName>
    </alternativeName>
</protein>
<proteinExistence type="inferred from homology"/>
<evidence type="ECO:0000255" key="1">
    <source>
        <dbReference type="HAMAP-Rule" id="MF_01350"/>
    </source>
</evidence>
<keyword id="KW-0997">Cell inner membrane</keyword>
<keyword id="KW-1003">Cell membrane</keyword>
<keyword id="KW-0472">Membrane</keyword>
<keyword id="KW-0520">NAD</keyword>
<keyword id="KW-0874">Quinone</keyword>
<keyword id="KW-1185">Reference proteome</keyword>
<keyword id="KW-1278">Translocase</keyword>
<keyword id="KW-0812">Transmembrane</keyword>
<keyword id="KW-1133">Transmembrane helix</keyword>
<keyword id="KW-0830">Ubiquinone</keyword>